<feature type="chain" id="PRO_0000230927" description="Glucose-6-phosphate isomerase">
    <location>
        <begin position="1"/>
        <end position="548"/>
    </location>
</feature>
<feature type="active site" description="Proton donor" evidence="1">
    <location>
        <position position="353"/>
    </location>
</feature>
<feature type="active site" evidence="1">
    <location>
        <position position="384"/>
    </location>
</feature>
<feature type="active site" evidence="1">
    <location>
        <position position="512"/>
    </location>
</feature>
<protein>
    <recommendedName>
        <fullName evidence="1">Glucose-6-phosphate isomerase</fullName>
        <shortName evidence="1">GPI</shortName>
        <ecNumber evidence="1">5.3.1.9</ecNumber>
    </recommendedName>
    <alternativeName>
        <fullName evidence="1">Phosphoglucose isomerase</fullName>
        <shortName evidence="1">PGI</shortName>
    </alternativeName>
    <alternativeName>
        <fullName evidence="1">Phosphohexose isomerase</fullName>
        <shortName evidence="1">PHI</shortName>
    </alternativeName>
</protein>
<organism>
    <name type="scientific">Pseudoalteromonas translucida (strain TAC 125)</name>
    <dbReference type="NCBI Taxonomy" id="326442"/>
    <lineage>
        <taxon>Bacteria</taxon>
        <taxon>Pseudomonadati</taxon>
        <taxon>Pseudomonadota</taxon>
        <taxon>Gammaproteobacteria</taxon>
        <taxon>Alteromonadales</taxon>
        <taxon>Pseudoalteromonadaceae</taxon>
        <taxon>Pseudoalteromonas</taxon>
    </lineage>
</organism>
<reference key="1">
    <citation type="journal article" date="2005" name="Genome Res.">
        <title>Coping with cold: the genome of the versatile marine Antarctica bacterium Pseudoalteromonas haloplanktis TAC125.</title>
        <authorList>
            <person name="Medigue C."/>
            <person name="Krin E."/>
            <person name="Pascal G."/>
            <person name="Barbe V."/>
            <person name="Bernsel A."/>
            <person name="Bertin P.N."/>
            <person name="Cheung F."/>
            <person name="Cruveiller S."/>
            <person name="D'Amico S."/>
            <person name="Duilio A."/>
            <person name="Fang G."/>
            <person name="Feller G."/>
            <person name="Ho C."/>
            <person name="Mangenot S."/>
            <person name="Marino G."/>
            <person name="Nilsson J."/>
            <person name="Parrilli E."/>
            <person name="Rocha E.P.C."/>
            <person name="Rouy Z."/>
            <person name="Sekowska A."/>
            <person name="Tutino M.L."/>
            <person name="Vallenet D."/>
            <person name="von Heijne G."/>
            <person name="Danchin A."/>
        </authorList>
    </citation>
    <scope>NUCLEOTIDE SEQUENCE [LARGE SCALE GENOMIC DNA]</scope>
    <source>
        <strain>TAC 125</strain>
    </source>
</reference>
<dbReference type="EC" id="5.3.1.9" evidence="1"/>
<dbReference type="EMBL" id="CR954246">
    <property type="protein sequence ID" value="CAI86214.1"/>
    <property type="molecule type" value="Genomic_DNA"/>
</dbReference>
<dbReference type="SMR" id="Q3IKH4"/>
<dbReference type="STRING" id="326442.PSHAa1139"/>
<dbReference type="KEGG" id="pha:PSHAa1139"/>
<dbReference type="PATRIC" id="fig|326442.8.peg.1096"/>
<dbReference type="eggNOG" id="COG0166">
    <property type="taxonomic scope" value="Bacteria"/>
</dbReference>
<dbReference type="HOGENOM" id="CLU_017947_3_1_6"/>
<dbReference type="BioCyc" id="PHAL326442:PSHA_RS05650-MONOMER"/>
<dbReference type="UniPathway" id="UPA00109">
    <property type="reaction ID" value="UER00181"/>
</dbReference>
<dbReference type="UniPathway" id="UPA00138"/>
<dbReference type="Proteomes" id="UP000006843">
    <property type="component" value="Chromosome I"/>
</dbReference>
<dbReference type="GO" id="GO:0005829">
    <property type="term" value="C:cytosol"/>
    <property type="evidence" value="ECO:0007669"/>
    <property type="project" value="TreeGrafter"/>
</dbReference>
<dbReference type="GO" id="GO:0097367">
    <property type="term" value="F:carbohydrate derivative binding"/>
    <property type="evidence" value="ECO:0007669"/>
    <property type="project" value="InterPro"/>
</dbReference>
<dbReference type="GO" id="GO:0004347">
    <property type="term" value="F:glucose-6-phosphate isomerase activity"/>
    <property type="evidence" value="ECO:0007669"/>
    <property type="project" value="UniProtKB-UniRule"/>
</dbReference>
<dbReference type="GO" id="GO:0048029">
    <property type="term" value="F:monosaccharide binding"/>
    <property type="evidence" value="ECO:0007669"/>
    <property type="project" value="TreeGrafter"/>
</dbReference>
<dbReference type="GO" id="GO:0006094">
    <property type="term" value="P:gluconeogenesis"/>
    <property type="evidence" value="ECO:0007669"/>
    <property type="project" value="UniProtKB-UniRule"/>
</dbReference>
<dbReference type="GO" id="GO:0051156">
    <property type="term" value="P:glucose 6-phosphate metabolic process"/>
    <property type="evidence" value="ECO:0007669"/>
    <property type="project" value="TreeGrafter"/>
</dbReference>
<dbReference type="GO" id="GO:0006096">
    <property type="term" value="P:glycolytic process"/>
    <property type="evidence" value="ECO:0007669"/>
    <property type="project" value="UniProtKB-UniRule"/>
</dbReference>
<dbReference type="CDD" id="cd05015">
    <property type="entry name" value="SIS_PGI_1"/>
    <property type="match status" value="1"/>
</dbReference>
<dbReference type="CDD" id="cd05016">
    <property type="entry name" value="SIS_PGI_2"/>
    <property type="match status" value="1"/>
</dbReference>
<dbReference type="FunFam" id="1.10.1390.10:FF:000001">
    <property type="entry name" value="Glucose-6-phosphate isomerase"/>
    <property type="match status" value="1"/>
</dbReference>
<dbReference type="FunFam" id="3.40.50.10490:FF:000004">
    <property type="entry name" value="Glucose-6-phosphate isomerase"/>
    <property type="match status" value="1"/>
</dbReference>
<dbReference type="Gene3D" id="1.10.1390.10">
    <property type="match status" value="1"/>
</dbReference>
<dbReference type="Gene3D" id="3.40.50.10490">
    <property type="entry name" value="Glucose-6-phosphate isomerase like protein, domain 1"/>
    <property type="match status" value="2"/>
</dbReference>
<dbReference type="HAMAP" id="MF_00473">
    <property type="entry name" value="G6P_isomerase"/>
    <property type="match status" value="1"/>
</dbReference>
<dbReference type="InterPro" id="IPR001672">
    <property type="entry name" value="G6P_Isomerase"/>
</dbReference>
<dbReference type="InterPro" id="IPR023096">
    <property type="entry name" value="G6P_Isomerase_C"/>
</dbReference>
<dbReference type="InterPro" id="IPR018189">
    <property type="entry name" value="Phosphoglucose_isomerase_CS"/>
</dbReference>
<dbReference type="InterPro" id="IPR046348">
    <property type="entry name" value="SIS_dom_sf"/>
</dbReference>
<dbReference type="InterPro" id="IPR035476">
    <property type="entry name" value="SIS_PGI_1"/>
</dbReference>
<dbReference type="InterPro" id="IPR035482">
    <property type="entry name" value="SIS_PGI_2"/>
</dbReference>
<dbReference type="NCBIfam" id="NF001211">
    <property type="entry name" value="PRK00179.1"/>
    <property type="match status" value="1"/>
</dbReference>
<dbReference type="PANTHER" id="PTHR11469">
    <property type="entry name" value="GLUCOSE-6-PHOSPHATE ISOMERASE"/>
    <property type="match status" value="1"/>
</dbReference>
<dbReference type="PANTHER" id="PTHR11469:SF1">
    <property type="entry name" value="GLUCOSE-6-PHOSPHATE ISOMERASE"/>
    <property type="match status" value="1"/>
</dbReference>
<dbReference type="Pfam" id="PF00342">
    <property type="entry name" value="PGI"/>
    <property type="match status" value="1"/>
</dbReference>
<dbReference type="PRINTS" id="PR00662">
    <property type="entry name" value="G6PISOMERASE"/>
</dbReference>
<dbReference type="SUPFAM" id="SSF53697">
    <property type="entry name" value="SIS domain"/>
    <property type="match status" value="1"/>
</dbReference>
<dbReference type="PROSITE" id="PS00765">
    <property type="entry name" value="P_GLUCOSE_ISOMERASE_1"/>
    <property type="match status" value="1"/>
</dbReference>
<dbReference type="PROSITE" id="PS00174">
    <property type="entry name" value="P_GLUCOSE_ISOMERASE_2"/>
    <property type="match status" value="1"/>
</dbReference>
<dbReference type="PROSITE" id="PS51463">
    <property type="entry name" value="P_GLUCOSE_ISOMERASE_3"/>
    <property type="match status" value="1"/>
</dbReference>
<accession>Q3IKH4</accession>
<sequence length="548" mass="60901">MTNRSQLASWQALEKSATKMKQSHLRDLFAKDDARFSQFSTQIPGLLFDYSKQRIDKDVFTQLIALAKECDISAWREKMFNGEKINITENRAVLHTALRNRAHTPLIVDGENVTELVDNELAKIKLFVEKVRSGKWLGYSGKPVKDVVSIGVGGSNLGPQMATEALKALSDDTLNVHYVSNADGVQIASVLKNIDAETTLFVIASKTFTTSETMTNAKTAVDWFLQTAKDNAAIAKHFVAVSTNLEKTAEFGISNDNVFTMWDWVGGRFSLWSAIGLPIALYAGYDAFEAILEGAYEVDEHFKNAPLEQNIPLIMALLSVWNTSFLGYTSQAILPYDQALHMLPAYLQQGEMESNGKHVNFAGETVPYTTVPIIWGMTGINGQHAFYQCLHQGNVIVPADFIASIKPQVNVDKHHDILLSNFFAQTEALMNGVDEQEITADLTAKGKSQAQIDELLKHKIHQGNRPTTSMLLDSVDAKTVGRLIALYEHKIFCQGIILEICSFDQWGVELGKGLASKIEAELVDERVKYAHDSSTNGLMAYYKQHRTQ</sequence>
<keyword id="KW-0963">Cytoplasm</keyword>
<keyword id="KW-0312">Gluconeogenesis</keyword>
<keyword id="KW-0324">Glycolysis</keyword>
<keyword id="KW-0413">Isomerase</keyword>
<keyword id="KW-1185">Reference proteome</keyword>
<proteinExistence type="inferred from homology"/>
<name>G6PI_PSET1</name>
<evidence type="ECO:0000255" key="1">
    <source>
        <dbReference type="HAMAP-Rule" id="MF_00473"/>
    </source>
</evidence>
<gene>
    <name evidence="1" type="primary">pgi</name>
    <name type="ordered locus">PSHAa1139</name>
</gene>
<comment type="function">
    <text evidence="1">Catalyzes the reversible isomerization of glucose-6-phosphate to fructose-6-phosphate.</text>
</comment>
<comment type="catalytic activity">
    <reaction evidence="1">
        <text>alpha-D-glucose 6-phosphate = beta-D-fructose 6-phosphate</text>
        <dbReference type="Rhea" id="RHEA:11816"/>
        <dbReference type="ChEBI" id="CHEBI:57634"/>
        <dbReference type="ChEBI" id="CHEBI:58225"/>
        <dbReference type="EC" id="5.3.1.9"/>
    </reaction>
</comment>
<comment type="pathway">
    <text evidence="1">Carbohydrate biosynthesis; gluconeogenesis.</text>
</comment>
<comment type="pathway">
    <text evidence="1">Carbohydrate degradation; glycolysis; D-glyceraldehyde 3-phosphate and glycerone phosphate from D-glucose: step 2/4.</text>
</comment>
<comment type="subcellular location">
    <subcellularLocation>
        <location evidence="1">Cytoplasm</location>
    </subcellularLocation>
</comment>
<comment type="similarity">
    <text evidence="1">Belongs to the GPI family.</text>
</comment>